<sequence length="1104" mass="125815">MSEAVEKIRSHDKYRQFYELATKIRNQKLLADAESASLHRHKQEVADLEVKLLTEAWRSSYWTNVSRQLKSQSLDPSYACRLLKEISDTEALAAYKHFGHHYSTLNQLLTVLYMEPTSVAELLNMWDQNDVTTNDNLIQTFFHLVYSCGLYPDDELKIAQVVCYLLKLQLVKSGSQMRTMLRKETSISTRFYKYFVEQMHPTMVYLTKALRKSVLNVIQLGNFWLDVDMKQSSSRFLSDGRQNSERLPEYRALVVSKLVDFVDNFLENISLALSMLPPNLNWIVRDIFCSLYEIVDDMSAIELSHACKDMIVSNLLCPAIISPQKFGVVDNDVRIGSIVNHNLAQIAMIIQMISLREFESPPEEYREFLSQCRNTHLISEMMDSLLVENMAPDVEITSLIASGKSESDLETKSNFVGSLADANKLIKMIRETPPTTDLKISRIVSVCQKMPESFASTVEKLHVENSEDSPKLSALRNIHRKVQKSFKRTGDSFYDPNELHMKTENYGGVFEKENFDRKLREASEVERRKQEARKQKQLKETELLIMDNISSDSAPITIKASAATNAPIANNNFTENKDLIDFSTLYTTTDDVISIPSEPSKEEKSVEKPNVNNVSVDAPVEALQIGESRGGLAKLKNFSDRMKKGITQSNTLSDIRDHLRRSSSLAKQPSGMVSSASAQNIPDTEKGDSILAKYASNSSIKIEKSTFTKLTDTKSMPKNTEMSEPYYSPENLTSCRAFKDTLRKMITVLGNVSYLPKIGCRSEMKEMSKKVRLDSFLDGVLVETEHRREYGQAAQLREVKRCIELFENEGVEILMDHLVGNEVEQDFLVRQMREERAILMRKSNDISSMEQRVLLNRRLTEQILVDNLIQTFLETGFQNSKLASGKTPEVVAVGKFYSEFKFLQAHDERAEFLQNLLTYLRERLMQNYDWNFATESMIARAMTTMERFVMFAVYEIAFWPNREMDQKKDKLLQSVIGKASSSVTPVHEALKIPEHLLGEAPWPSAQAELSMLDNYVTAQEKLNCLVRCCDVINNLVALSSKNAVASADDLTPVLVFVIIKANPRSLLSNLQFIETFAGDQIESGRDAYYWVNFKSAVEYIKTIL</sequence>
<evidence type="ECO:0000250" key="1"/>
<evidence type="ECO:0000255" key="2">
    <source>
        <dbReference type="PROSITE-ProRule" id="PRU00167"/>
    </source>
</evidence>
<evidence type="ECO:0000255" key="3">
    <source>
        <dbReference type="PROSITE-ProRule" id="PRU00550"/>
    </source>
</evidence>
<evidence type="ECO:0000256" key="4">
    <source>
        <dbReference type="SAM" id="MobiDB-lite"/>
    </source>
</evidence>
<evidence type="ECO:0000305" key="5"/>
<feature type="chain" id="PRO_0000324774" description="Receptor-mediated endocytosis protein 6">
    <location>
        <begin position="1"/>
        <end position="1104"/>
    </location>
</feature>
<feature type="domain" description="Ras-GAP" evidence="2">
    <location>
        <begin position="156"/>
        <end position="389"/>
    </location>
</feature>
<feature type="domain" description="VPS9" evidence="3">
    <location>
        <begin position="966"/>
        <end position="1104"/>
    </location>
</feature>
<feature type="region of interest" description="Disordered" evidence="4">
    <location>
        <begin position="663"/>
        <end position="682"/>
    </location>
</feature>
<feature type="site" description="Arginine finger; crucial for GTP hydrolysis by stabilizing the transition state" evidence="2">
    <location>
        <position position="182"/>
    </location>
</feature>
<organism>
    <name type="scientific">Caenorhabditis briggsae</name>
    <dbReference type="NCBI Taxonomy" id="6238"/>
    <lineage>
        <taxon>Eukaryota</taxon>
        <taxon>Metazoa</taxon>
        <taxon>Ecdysozoa</taxon>
        <taxon>Nematoda</taxon>
        <taxon>Chromadorea</taxon>
        <taxon>Rhabditida</taxon>
        <taxon>Rhabditina</taxon>
        <taxon>Rhabditomorpha</taxon>
        <taxon>Rhabditoidea</taxon>
        <taxon>Rhabditidae</taxon>
        <taxon>Peloderinae</taxon>
        <taxon>Caenorhabditis</taxon>
    </lineage>
</organism>
<comment type="function">
    <text evidence="1">Acts both as a GTPase-activating protein (GAP) and a guanine nucleotide exchange factor (GEF), and participates in endocytosis. Acts by regulating the activation of rab-5 by exchanging bound GDP for free GTP at clathrin coated pits (By similarity).</text>
</comment>
<comment type="subunit">
    <text evidence="1">Interacts with GDP-bound rab-5. Interacts with alpha-adaptin (By similarity).</text>
</comment>
<comment type="subcellular location">
    <subcellularLocation>
        <location>Membrane</location>
        <topology>Peripheral membrane protein</topology>
    </subcellularLocation>
    <subcellularLocation>
        <location evidence="1">Cytoplasmic vesicle</location>
        <location evidence="1">Clathrin-coated vesicle</location>
    </subcellularLocation>
</comment>
<comment type="similarity">
    <text evidence="5">Belongs to the GAPVD1 family.</text>
</comment>
<accession>A8WVM4</accession>
<dbReference type="EMBL" id="HE600974">
    <property type="protein sequence ID" value="CAP24535.3"/>
    <property type="molecule type" value="Genomic_DNA"/>
</dbReference>
<dbReference type="SMR" id="A8WVM4"/>
<dbReference type="FunCoup" id="A8WVM4">
    <property type="interactions" value="3216"/>
</dbReference>
<dbReference type="STRING" id="6238.A8WVM4"/>
<dbReference type="KEGG" id="cbr:CBG_04130"/>
<dbReference type="CTD" id="8585309"/>
<dbReference type="WormBase" id="CBG04130">
    <property type="protein sequence ID" value="CBP46353"/>
    <property type="gene ID" value="WBGene00026865"/>
    <property type="gene designation" value="Cbr-rme-6"/>
</dbReference>
<dbReference type="eggNOG" id="KOG2319">
    <property type="taxonomic scope" value="Eukaryota"/>
</dbReference>
<dbReference type="HOGENOM" id="CLU_012490_0_0_1"/>
<dbReference type="InParanoid" id="A8WVM4"/>
<dbReference type="OMA" id="ELSHACK"/>
<dbReference type="Proteomes" id="UP000008549">
    <property type="component" value="Unassembled WGS sequence"/>
</dbReference>
<dbReference type="GO" id="GO:0030136">
    <property type="term" value="C:clathrin-coated vesicle"/>
    <property type="evidence" value="ECO:0007669"/>
    <property type="project" value="UniProtKB-SubCell"/>
</dbReference>
<dbReference type="GO" id="GO:0005829">
    <property type="term" value="C:cytosol"/>
    <property type="evidence" value="ECO:0000250"/>
    <property type="project" value="UniProtKB"/>
</dbReference>
<dbReference type="GO" id="GO:0030139">
    <property type="term" value="C:endocytic vesicle"/>
    <property type="evidence" value="ECO:0000318"/>
    <property type="project" value="GO_Central"/>
</dbReference>
<dbReference type="GO" id="GO:0016020">
    <property type="term" value="C:membrane"/>
    <property type="evidence" value="ECO:0007669"/>
    <property type="project" value="UniProtKB-SubCell"/>
</dbReference>
<dbReference type="GO" id="GO:0032794">
    <property type="term" value="F:GTPase activating protein binding"/>
    <property type="evidence" value="ECO:0000250"/>
    <property type="project" value="UniProtKB"/>
</dbReference>
<dbReference type="GO" id="GO:0005096">
    <property type="term" value="F:GTPase activator activity"/>
    <property type="evidence" value="ECO:0007669"/>
    <property type="project" value="UniProtKB-KW"/>
</dbReference>
<dbReference type="GO" id="GO:0005085">
    <property type="term" value="F:guanyl-nucleotide exchange factor activity"/>
    <property type="evidence" value="ECO:0000250"/>
    <property type="project" value="UniProtKB"/>
</dbReference>
<dbReference type="GO" id="GO:0031267">
    <property type="term" value="F:small GTPase binding"/>
    <property type="evidence" value="ECO:0000318"/>
    <property type="project" value="GO_Central"/>
</dbReference>
<dbReference type="GO" id="GO:0006897">
    <property type="term" value="P:endocytosis"/>
    <property type="evidence" value="ECO:0007669"/>
    <property type="project" value="UniProtKB-KW"/>
</dbReference>
<dbReference type="GO" id="GO:0051223">
    <property type="term" value="P:regulation of protein transport"/>
    <property type="evidence" value="ECO:0000250"/>
    <property type="project" value="UniProtKB"/>
</dbReference>
<dbReference type="FunFam" id="1.20.1050.80:FF:000001">
    <property type="entry name" value="GTPase-activating protein and VPS9 domain-containing protein 1 isoform X1"/>
    <property type="match status" value="1"/>
</dbReference>
<dbReference type="FunFam" id="1.10.506.10:FF:000051">
    <property type="entry name" value="Receptor-mediated endocytosis protein 6"/>
    <property type="match status" value="1"/>
</dbReference>
<dbReference type="Gene3D" id="1.10.506.10">
    <property type="entry name" value="GTPase Activation - p120gap, domain 1"/>
    <property type="match status" value="1"/>
</dbReference>
<dbReference type="Gene3D" id="1.20.1050.80">
    <property type="entry name" value="VPS9 domain"/>
    <property type="match status" value="1"/>
</dbReference>
<dbReference type="InterPro" id="IPR001936">
    <property type="entry name" value="RasGAP_dom"/>
</dbReference>
<dbReference type="InterPro" id="IPR008936">
    <property type="entry name" value="Rho_GTPase_activation_prot"/>
</dbReference>
<dbReference type="InterPro" id="IPR003123">
    <property type="entry name" value="VPS9"/>
</dbReference>
<dbReference type="InterPro" id="IPR045046">
    <property type="entry name" value="Vps9-like"/>
</dbReference>
<dbReference type="InterPro" id="IPR037191">
    <property type="entry name" value="VPS9_dom_sf"/>
</dbReference>
<dbReference type="PANTHER" id="PTHR23101:SF25">
    <property type="entry name" value="GTPASE-ACTIVATING PROTEIN AND VPS9 DOMAIN-CONTAINING PROTEIN 1"/>
    <property type="match status" value="1"/>
</dbReference>
<dbReference type="PANTHER" id="PTHR23101">
    <property type="entry name" value="RAB GDP/GTP EXCHANGE FACTOR"/>
    <property type="match status" value="1"/>
</dbReference>
<dbReference type="Pfam" id="PF00616">
    <property type="entry name" value="RasGAP"/>
    <property type="match status" value="1"/>
</dbReference>
<dbReference type="Pfam" id="PF02204">
    <property type="entry name" value="VPS9"/>
    <property type="match status" value="1"/>
</dbReference>
<dbReference type="SMART" id="SM00167">
    <property type="entry name" value="VPS9"/>
    <property type="match status" value="1"/>
</dbReference>
<dbReference type="SUPFAM" id="SSF48350">
    <property type="entry name" value="GTPase activation domain, GAP"/>
    <property type="match status" value="1"/>
</dbReference>
<dbReference type="SUPFAM" id="SSF109993">
    <property type="entry name" value="VPS9 domain"/>
    <property type="match status" value="1"/>
</dbReference>
<dbReference type="PROSITE" id="PS50018">
    <property type="entry name" value="RAS_GTPASE_ACTIV_2"/>
    <property type="match status" value="1"/>
</dbReference>
<dbReference type="PROSITE" id="PS51205">
    <property type="entry name" value="VPS9"/>
    <property type="match status" value="1"/>
</dbReference>
<protein>
    <recommendedName>
        <fullName>Receptor-mediated endocytosis protein 6</fullName>
    </recommendedName>
</protein>
<keyword id="KW-0968">Cytoplasmic vesicle</keyword>
<keyword id="KW-0254">Endocytosis</keyword>
<keyword id="KW-0343">GTPase activation</keyword>
<keyword id="KW-0344">Guanine-nucleotide releasing factor</keyword>
<keyword id="KW-0472">Membrane</keyword>
<keyword id="KW-1185">Reference proteome</keyword>
<reference key="1">
    <citation type="journal article" date="2003" name="PLoS Biol.">
        <title>The genome sequence of Caenorhabditis briggsae: a platform for comparative genomics.</title>
        <authorList>
            <person name="Stein L.D."/>
            <person name="Bao Z."/>
            <person name="Blasiar D."/>
            <person name="Blumenthal T."/>
            <person name="Brent M.R."/>
            <person name="Chen N."/>
            <person name="Chinwalla A."/>
            <person name="Clarke L."/>
            <person name="Clee C."/>
            <person name="Coghlan A."/>
            <person name="Coulson A."/>
            <person name="D'Eustachio P."/>
            <person name="Fitch D.H.A."/>
            <person name="Fulton L.A."/>
            <person name="Fulton R.E."/>
            <person name="Griffiths-Jones S."/>
            <person name="Harris T.W."/>
            <person name="Hillier L.W."/>
            <person name="Kamath R."/>
            <person name="Kuwabara P.E."/>
            <person name="Mardis E.R."/>
            <person name="Marra M.A."/>
            <person name="Miner T.L."/>
            <person name="Minx P."/>
            <person name="Mullikin J.C."/>
            <person name="Plumb R.W."/>
            <person name="Rogers J."/>
            <person name="Schein J.E."/>
            <person name="Sohrmann M."/>
            <person name="Spieth J."/>
            <person name="Stajich J.E."/>
            <person name="Wei C."/>
            <person name="Willey D."/>
            <person name="Wilson R.K."/>
            <person name="Durbin R.M."/>
            <person name="Waterston R.H."/>
        </authorList>
    </citation>
    <scope>NUCLEOTIDE SEQUENCE [LARGE SCALE GENOMIC DNA]</scope>
    <source>
        <strain>AF16</strain>
    </source>
</reference>
<gene>
    <name type="primary">rme-6</name>
    <name type="ORF">CBG04130</name>
</gene>
<proteinExistence type="inferred from homology"/>
<name>RME6_CAEBR</name>